<organism>
    <name type="scientific">Drosophila sechellia</name>
    <name type="common">Fruit fly</name>
    <dbReference type="NCBI Taxonomy" id="7238"/>
    <lineage>
        <taxon>Eukaryota</taxon>
        <taxon>Metazoa</taxon>
        <taxon>Ecdysozoa</taxon>
        <taxon>Arthropoda</taxon>
        <taxon>Hexapoda</taxon>
        <taxon>Insecta</taxon>
        <taxon>Pterygota</taxon>
        <taxon>Neoptera</taxon>
        <taxon>Endopterygota</taxon>
        <taxon>Diptera</taxon>
        <taxon>Brachycera</taxon>
        <taxon>Muscomorpha</taxon>
        <taxon>Ephydroidea</taxon>
        <taxon>Drosophilidae</taxon>
        <taxon>Drosophila</taxon>
        <taxon>Sophophora</taxon>
    </lineage>
</organism>
<protein>
    <recommendedName>
        <fullName evidence="3">Eukaryotic translation initiation factor 3 subunit D-1</fullName>
        <shortName evidence="3">eIF3d-1</shortName>
    </recommendedName>
    <alternativeName>
        <fullName evidence="3">Eukaryotic translation initiation factor 3 subunit 7-1</fullName>
    </alternativeName>
    <alternativeName>
        <fullName>Eukaryotic translation initiation factor 3 subunit p66</fullName>
    </alternativeName>
</protein>
<accession>B4HFV9</accession>
<sequence length="560" mass="63799">MSETINTAAQFPSFEKPTVQFNEKGWGPCELPDTFKDVPYQPFSKNDRLGKICDWTNTSNNDKKYQNKYASSFGTGNQYSYYHEEDETTFHLVDTARVQKPPHQRGRFRNMRNSRSGRGRNARGGLNTHGMTTLSGKNVKARDPRHGRGMGKKFGHRGPPPKMRESSVAVRADWASIEEMDFPRLIKLSLPNIKEGVDIVTCGTLEYYDKTYDRINVKNEKPLQKIDRIVHTVTTTDDPVIRRLSKTVGNVFATDAILATIMCSTRSNYSWDIVIEKVGDKVFMDKRDHTEFDLLTVNESSVEPPTDDDSSCNSPRNLAIEATFINHNFSQQVLKTGDQEPKYKFEESNPFISEDEDIQVASVGYRYKKWELGSDIVLVARCEHDGVLQTPSGEPQFMTIKALNEWDSKLANGVEWRQKLDTQRGAVLANELRNNACKLAKWTVQAVLAGSDQLKLGYVSRINPRDHSRHVILGTQQFKPHEFATQINLSMDNAWGILRCIIDLVMKQKDGKYLIMKDPNKPIIRLYDIPDNTFDSDDSDDGEGDDEGFQQVYNYAHNKI</sequence>
<keyword id="KW-0963">Cytoplasm</keyword>
<keyword id="KW-0396">Initiation factor</keyword>
<keyword id="KW-0597">Phosphoprotein</keyword>
<keyword id="KW-0648">Protein biosynthesis</keyword>
<keyword id="KW-1185">Reference proteome</keyword>
<keyword id="KW-0694">RNA-binding</keyword>
<reference key="1">
    <citation type="journal article" date="2007" name="Nature">
        <title>Evolution of genes and genomes on the Drosophila phylogeny.</title>
        <authorList>
            <consortium name="Drosophila 12 genomes consortium"/>
        </authorList>
    </citation>
    <scope>NUCLEOTIDE SEQUENCE [LARGE SCALE GENOMIC DNA]</scope>
    <source>
        <strain>Rob3c / Tucson 14021-0248.25</strain>
    </source>
</reference>
<comment type="function">
    <text evidence="3">mRNA cap-binding component of the eukaryotic translation initiation factor 3 (eIF-3) complex, which is involved in protein synthesis of a specialized repertoire of mRNAs and, together with other initiation factors, stimulates binding of mRNA and methionyl-tRNAi to the 40S ribosome. The eIF-3 complex specifically targets and initiates translation of a subset of mRNAs involved in cell proliferation. In the eIF-3 complex, eif3d specifically recognizes and binds the 7-methylguanosine cap of a subset of mRNAs.</text>
</comment>
<comment type="subunit">
    <text evidence="3">Component of the eukaryotic translation initiation factor 3 (eIF-3) complex. The eIF-3 complex interacts with pix.</text>
</comment>
<comment type="subcellular location">
    <subcellularLocation>
        <location evidence="3">Cytoplasm</location>
    </subcellularLocation>
</comment>
<comment type="domain">
    <text evidence="3">The RNA gate region regulates mRNA cap recognition to prevent promiscuous mRNA-binding before assembly of eif3d into the full eukaryotic translation initiation factor 3 (eIF-3) complex.</text>
</comment>
<comment type="similarity">
    <text evidence="3">Belongs to the eIF-3 subunit D family.</text>
</comment>
<feature type="chain" id="PRO_0000364156" description="Eukaryotic translation initiation factor 3 subunit D-1">
    <location>
        <begin position="1"/>
        <end position="560"/>
    </location>
</feature>
<feature type="region of interest" description="Disordered" evidence="4">
    <location>
        <begin position="98"/>
        <end position="166"/>
    </location>
</feature>
<feature type="region of interest" description="RNA gate" evidence="2">
    <location>
        <begin position="291"/>
        <end position="305"/>
    </location>
</feature>
<feature type="compositionally biased region" description="Basic residues" evidence="4">
    <location>
        <begin position="100"/>
        <end position="121"/>
    </location>
</feature>
<feature type="compositionally biased region" description="Basic residues" evidence="4">
    <location>
        <begin position="147"/>
        <end position="156"/>
    </location>
</feature>
<feature type="modified residue" description="Phosphothreonine" evidence="1">
    <location>
        <position position="128"/>
    </location>
</feature>
<name>EI3D1_DROSE</name>
<gene>
    <name evidence="3" type="primary">eIF3d1</name>
    <name type="synonym">eIF-3p66</name>
    <name type="ORF">GM26513</name>
</gene>
<dbReference type="EMBL" id="CH480815">
    <property type="protein sequence ID" value="EDW43352.1"/>
    <property type="molecule type" value="Genomic_DNA"/>
</dbReference>
<dbReference type="SMR" id="B4HFV9"/>
<dbReference type="STRING" id="7238.B4HFV9"/>
<dbReference type="EnsemblMetazoa" id="FBtr0209498">
    <property type="protein sequence ID" value="FBpp0207990"/>
    <property type="gene ID" value="FBgn0181366"/>
</dbReference>
<dbReference type="EnsemblMetazoa" id="XM_002032330.2">
    <property type="protein sequence ID" value="XP_002032366.1"/>
    <property type="gene ID" value="LOC6607598"/>
</dbReference>
<dbReference type="GeneID" id="6607598"/>
<dbReference type="KEGG" id="dse:6607598"/>
<dbReference type="CTD" id="42789"/>
<dbReference type="HOGENOM" id="CLU_024521_2_0_1"/>
<dbReference type="OMA" id="FMDKRDN"/>
<dbReference type="OrthoDB" id="13178at7215"/>
<dbReference type="PhylomeDB" id="B4HFV9"/>
<dbReference type="ChiTaRS" id="eIF-3p66">
    <property type="organism name" value="fly"/>
</dbReference>
<dbReference type="Proteomes" id="UP000001292">
    <property type="component" value="Unassembled WGS sequence"/>
</dbReference>
<dbReference type="GO" id="GO:0016282">
    <property type="term" value="C:eukaryotic 43S preinitiation complex"/>
    <property type="evidence" value="ECO:0007669"/>
    <property type="project" value="UniProtKB-UniRule"/>
</dbReference>
<dbReference type="GO" id="GO:0033290">
    <property type="term" value="C:eukaryotic 48S preinitiation complex"/>
    <property type="evidence" value="ECO:0007669"/>
    <property type="project" value="UniProtKB-UniRule"/>
</dbReference>
<dbReference type="GO" id="GO:0005852">
    <property type="term" value="C:eukaryotic translation initiation factor 3 complex"/>
    <property type="evidence" value="ECO:0000250"/>
    <property type="project" value="UniProtKB"/>
</dbReference>
<dbReference type="GO" id="GO:0005634">
    <property type="term" value="C:nucleus"/>
    <property type="evidence" value="ECO:0007669"/>
    <property type="project" value="EnsemblMetazoa"/>
</dbReference>
<dbReference type="GO" id="GO:0098808">
    <property type="term" value="F:mRNA cap binding"/>
    <property type="evidence" value="ECO:0007669"/>
    <property type="project" value="UniProtKB-UniRule"/>
</dbReference>
<dbReference type="GO" id="GO:0003743">
    <property type="term" value="F:translation initiation factor activity"/>
    <property type="evidence" value="ECO:0000250"/>
    <property type="project" value="UniProtKB"/>
</dbReference>
<dbReference type="GO" id="GO:0002191">
    <property type="term" value="P:cap-dependent translational initiation"/>
    <property type="evidence" value="ECO:0007669"/>
    <property type="project" value="UniProtKB-UniRule"/>
</dbReference>
<dbReference type="GO" id="GO:0001732">
    <property type="term" value="P:formation of cytoplasmic translation initiation complex"/>
    <property type="evidence" value="ECO:0007669"/>
    <property type="project" value="UniProtKB-UniRule"/>
</dbReference>
<dbReference type="GO" id="GO:0006446">
    <property type="term" value="P:regulation of translational initiation"/>
    <property type="evidence" value="ECO:0000250"/>
    <property type="project" value="UniProtKB"/>
</dbReference>
<dbReference type="HAMAP" id="MF_03003">
    <property type="entry name" value="eIF3d"/>
    <property type="match status" value="1"/>
</dbReference>
<dbReference type="InterPro" id="IPR007783">
    <property type="entry name" value="eIF3d"/>
</dbReference>
<dbReference type="PANTHER" id="PTHR12399">
    <property type="entry name" value="EUKARYOTIC TRANSLATION INITIATION FACTOR 3 SUBUNIT 7"/>
    <property type="match status" value="1"/>
</dbReference>
<dbReference type="PANTHER" id="PTHR12399:SF0">
    <property type="entry name" value="EUKARYOTIC TRANSLATION INITIATION FACTOR 3 SUBUNIT D"/>
    <property type="match status" value="1"/>
</dbReference>
<dbReference type="Pfam" id="PF05091">
    <property type="entry name" value="eIF-3_zeta"/>
    <property type="match status" value="1"/>
</dbReference>
<dbReference type="PIRSF" id="PIRSF016281">
    <property type="entry name" value="EIF-3_zeta"/>
    <property type="match status" value="1"/>
</dbReference>
<evidence type="ECO:0000250" key="1"/>
<evidence type="ECO:0000250" key="2">
    <source>
        <dbReference type="UniProtKB" id="K7IM66"/>
    </source>
</evidence>
<evidence type="ECO:0000255" key="3">
    <source>
        <dbReference type="HAMAP-Rule" id="MF_03003"/>
    </source>
</evidence>
<evidence type="ECO:0000256" key="4">
    <source>
        <dbReference type="SAM" id="MobiDB-lite"/>
    </source>
</evidence>
<proteinExistence type="inferred from homology"/>